<protein>
    <recommendedName>
        <fullName>Platelet-derived growth factor subunit B</fullName>
        <shortName>PDGF subunit B</shortName>
    </recommendedName>
    <alternativeName>
        <fullName>PDGF-2</fullName>
    </alternativeName>
    <alternativeName>
        <fullName>Platelet-derived growth factor B chain</fullName>
    </alternativeName>
    <alternativeName>
        <fullName>Platelet-derived growth factor beta polypeptide</fullName>
    </alternativeName>
    <alternativeName>
        <fullName>Proto-oncogene c-Sis</fullName>
    </alternativeName>
</protein>
<proteinExistence type="evidence at transcript level"/>
<dbReference type="EMBL" id="X05112">
    <property type="protein sequence ID" value="CAA28758.1"/>
    <property type="status" value="ALT_SEQ"/>
    <property type="molecule type" value="mRNA"/>
</dbReference>
<dbReference type="PIR" id="A26402">
    <property type="entry name" value="TVCTSS"/>
</dbReference>
<dbReference type="SMR" id="P12919"/>
<dbReference type="FunCoup" id="P12919">
    <property type="interactions" value="83"/>
</dbReference>
<dbReference type="STRING" id="9685.ENSFCAP00000014447"/>
<dbReference type="GlyCosmos" id="P12919">
    <property type="glycosylation" value="1 site, No reported glycans"/>
</dbReference>
<dbReference type="PaxDb" id="9685-ENSFCAP00000014447"/>
<dbReference type="eggNOG" id="ENOG502S2VW">
    <property type="taxonomic scope" value="Eukaryota"/>
</dbReference>
<dbReference type="InParanoid" id="P12919"/>
<dbReference type="Proteomes" id="UP000011712">
    <property type="component" value="Unplaced"/>
</dbReference>
<dbReference type="GO" id="GO:0016323">
    <property type="term" value="C:basolateral plasma membrane"/>
    <property type="evidence" value="ECO:0000250"/>
    <property type="project" value="UniProtKB"/>
</dbReference>
<dbReference type="GO" id="GO:0009986">
    <property type="term" value="C:cell surface"/>
    <property type="evidence" value="ECO:0000250"/>
    <property type="project" value="UniProtKB"/>
</dbReference>
<dbReference type="GO" id="GO:0005737">
    <property type="term" value="C:cytoplasm"/>
    <property type="evidence" value="ECO:0000250"/>
    <property type="project" value="UniProtKB"/>
</dbReference>
<dbReference type="GO" id="GO:0005615">
    <property type="term" value="C:extracellular space"/>
    <property type="evidence" value="ECO:0000318"/>
    <property type="project" value="GO_Central"/>
</dbReference>
<dbReference type="GO" id="GO:0008083">
    <property type="term" value="F:growth factor activity"/>
    <property type="evidence" value="ECO:0000250"/>
    <property type="project" value="UniProtKB"/>
</dbReference>
<dbReference type="GO" id="GO:0005161">
    <property type="term" value="F:platelet-derived growth factor receptor binding"/>
    <property type="evidence" value="ECO:0000250"/>
    <property type="project" value="UniProtKB"/>
</dbReference>
<dbReference type="GO" id="GO:0042803">
    <property type="term" value="F:protein homodimerization activity"/>
    <property type="evidence" value="ECO:0000250"/>
    <property type="project" value="UniProtKB"/>
</dbReference>
<dbReference type="GO" id="GO:0016176">
    <property type="term" value="F:superoxide-generating NADPH oxidase activator activity"/>
    <property type="evidence" value="ECO:0000250"/>
    <property type="project" value="UniProtKB"/>
</dbReference>
<dbReference type="GO" id="GO:0001525">
    <property type="term" value="P:angiogenesis"/>
    <property type="evidence" value="ECO:0000318"/>
    <property type="project" value="GO_Central"/>
</dbReference>
<dbReference type="GO" id="GO:0060326">
    <property type="term" value="P:cell chemotaxis"/>
    <property type="evidence" value="ECO:0000250"/>
    <property type="project" value="UniProtKB"/>
</dbReference>
<dbReference type="GO" id="GO:0071506">
    <property type="term" value="P:cellular response to mycophenolic acid"/>
    <property type="evidence" value="ECO:0000250"/>
    <property type="project" value="UniProtKB"/>
</dbReference>
<dbReference type="GO" id="GO:0001892">
    <property type="term" value="P:embryonic placenta development"/>
    <property type="evidence" value="ECO:0000250"/>
    <property type="project" value="UniProtKB"/>
</dbReference>
<dbReference type="GO" id="GO:0007507">
    <property type="term" value="P:heart development"/>
    <property type="evidence" value="ECO:0000250"/>
    <property type="project" value="UniProtKB"/>
</dbReference>
<dbReference type="GO" id="GO:0072255">
    <property type="term" value="P:metanephric glomerular mesangial cell development"/>
    <property type="evidence" value="ECO:0000250"/>
    <property type="project" value="UniProtKB"/>
</dbReference>
<dbReference type="GO" id="GO:0002548">
    <property type="term" value="P:monocyte chemotaxis"/>
    <property type="evidence" value="ECO:0000250"/>
    <property type="project" value="UniProtKB"/>
</dbReference>
<dbReference type="GO" id="GO:0010629">
    <property type="term" value="P:negative regulation of gene expression"/>
    <property type="evidence" value="ECO:0000250"/>
    <property type="project" value="UniProtKB"/>
</dbReference>
<dbReference type="GO" id="GO:0010512">
    <property type="term" value="P:negative regulation of phosphatidylinositol biosynthetic process"/>
    <property type="evidence" value="ECO:0000250"/>
    <property type="project" value="UniProtKB"/>
</dbReference>
<dbReference type="GO" id="GO:0010544">
    <property type="term" value="P:negative regulation of platelet activation"/>
    <property type="evidence" value="ECO:0000250"/>
    <property type="project" value="UniProtKB"/>
</dbReference>
<dbReference type="GO" id="GO:0038001">
    <property type="term" value="P:paracrine signaling"/>
    <property type="evidence" value="ECO:0000250"/>
    <property type="project" value="UniProtKB"/>
</dbReference>
<dbReference type="GO" id="GO:0018108">
    <property type="term" value="P:peptidyl-tyrosine phosphorylation"/>
    <property type="evidence" value="ECO:0000250"/>
    <property type="project" value="UniProtKB"/>
</dbReference>
<dbReference type="GO" id="GO:0048008">
    <property type="term" value="P:platelet-derived growth factor receptor signaling pathway"/>
    <property type="evidence" value="ECO:0000250"/>
    <property type="project" value="UniProtKB"/>
</dbReference>
<dbReference type="GO" id="GO:0043536">
    <property type="term" value="P:positive regulation of blood vessel endothelial cell migration"/>
    <property type="evidence" value="ECO:0000250"/>
    <property type="project" value="UniProtKB"/>
</dbReference>
<dbReference type="GO" id="GO:0090280">
    <property type="term" value="P:positive regulation of calcium ion import"/>
    <property type="evidence" value="ECO:0000250"/>
    <property type="project" value="UniProtKB"/>
</dbReference>
<dbReference type="GO" id="GO:0051781">
    <property type="term" value="P:positive regulation of cell division"/>
    <property type="evidence" value="ECO:0007669"/>
    <property type="project" value="UniProtKB-KW"/>
</dbReference>
<dbReference type="GO" id="GO:0030335">
    <property type="term" value="P:positive regulation of cell migration"/>
    <property type="evidence" value="ECO:0000250"/>
    <property type="project" value="UniProtKB"/>
</dbReference>
<dbReference type="GO" id="GO:0008284">
    <property type="term" value="P:positive regulation of cell population proliferation"/>
    <property type="evidence" value="ECO:0000250"/>
    <property type="project" value="UniProtKB"/>
</dbReference>
<dbReference type="GO" id="GO:0050921">
    <property type="term" value="P:positive regulation of chemotaxis"/>
    <property type="evidence" value="ECO:0000250"/>
    <property type="project" value="UniProtKB"/>
</dbReference>
<dbReference type="GO" id="GO:2000573">
    <property type="term" value="P:positive regulation of DNA biosynthetic process"/>
    <property type="evidence" value="ECO:0000250"/>
    <property type="project" value="UniProtKB"/>
</dbReference>
<dbReference type="GO" id="GO:0045893">
    <property type="term" value="P:positive regulation of DNA-templated transcription"/>
    <property type="evidence" value="ECO:0000250"/>
    <property type="project" value="UniProtKB"/>
</dbReference>
<dbReference type="GO" id="GO:0001938">
    <property type="term" value="P:positive regulation of endothelial cell proliferation"/>
    <property type="evidence" value="ECO:0000250"/>
    <property type="project" value="UniProtKB"/>
</dbReference>
<dbReference type="GO" id="GO:0070374">
    <property type="term" value="P:positive regulation of ERK1 and ERK2 cascade"/>
    <property type="evidence" value="ECO:0000250"/>
    <property type="project" value="UniProtKB"/>
</dbReference>
<dbReference type="GO" id="GO:0048146">
    <property type="term" value="P:positive regulation of fibroblast proliferation"/>
    <property type="evidence" value="ECO:0000250"/>
    <property type="project" value="UniProtKB"/>
</dbReference>
<dbReference type="GO" id="GO:0003104">
    <property type="term" value="P:positive regulation of glomerular filtration"/>
    <property type="evidence" value="ECO:0000250"/>
    <property type="project" value="UniProtKB"/>
</dbReference>
<dbReference type="GO" id="GO:0072126">
    <property type="term" value="P:positive regulation of glomerular mesangial cell proliferation"/>
    <property type="evidence" value="ECO:0000250"/>
    <property type="project" value="UniProtKB"/>
</dbReference>
<dbReference type="GO" id="GO:1900127">
    <property type="term" value="P:positive regulation of hyaluronan biosynthetic process"/>
    <property type="evidence" value="ECO:0000250"/>
    <property type="project" value="UniProtKB"/>
</dbReference>
<dbReference type="GO" id="GO:0043406">
    <property type="term" value="P:positive regulation of MAP kinase activity"/>
    <property type="evidence" value="ECO:0000250"/>
    <property type="project" value="UniProtKB"/>
</dbReference>
<dbReference type="GO" id="GO:0043410">
    <property type="term" value="P:positive regulation of MAPK cascade"/>
    <property type="evidence" value="ECO:0000250"/>
    <property type="project" value="UniProtKB"/>
</dbReference>
<dbReference type="GO" id="GO:2000591">
    <property type="term" value="P:positive regulation of metanephric mesenchymal cell migration"/>
    <property type="evidence" value="ECO:0000250"/>
    <property type="project" value="UniProtKB"/>
</dbReference>
<dbReference type="GO" id="GO:0035793">
    <property type="term" value="P:positive regulation of metanephric mesenchymal cell migration by platelet-derived growth factor receptor-beta signaling pathway"/>
    <property type="evidence" value="ECO:0000250"/>
    <property type="project" value="UniProtKB"/>
</dbReference>
<dbReference type="GO" id="GO:0045840">
    <property type="term" value="P:positive regulation of mitotic nuclear division"/>
    <property type="evidence" value="ECO:0000250"/>
    <property type="project" value="UniProtKB"/>
</dbReference>
<dbReference type="GO" id="GO:0051897">
    <property type="term" value="P:positive regulation of phosphatidylinositol 3-kinase/protein kinase B signal transduction"/>
    <property type="evidence" value="ECO:0000250"/>
    <property type="project" value="UniProtKB"/>
</dbReference>
<dbReference type="GO" id="GO:0031954">
    <property type="term" value="P:positive regulation of protein autophosphorylation"/>
    <property type="evidence" value="ECO:0000250"/>
    <property type="project" value="UniProtKB"/>
</dbReference>
<dbReference type="GO" id="GO:2000379">
    <property type="term" value="P:positive regulation of reactive oxygen species metabolic process"/>
    <property type="evidence" value="ECO:0000250"/>
    <property type="project" value="UniProtKB"/>
</dbReference>
<dbReference type="GO" id="GO:0014911">
    <property type="term" value="P:positive regulation of smooth muscle cell migration"/>
    <property type="evidence" value="ECO:0000250"/>
    <property type="project" value="UniProtKB"/>
</dbReference>
<dbReference type="GO" id="GO:0048661">
    <property type="term" value="P:positive regulation of smooth muscle cell proliferation"/>
    <property type="evidence" value="ECO:0000250"/>
    <property type="project" value="UniProtKB"/>
</dbReference>
<dbReference type="GO" id="GO:1904707">
    <property type="term" value="P:positive regulation of vascular associated smooth muscle cell proliferation"/>
    <property type="evidence" value="ECO:0000250"/>
    <property type="project" value="UniProtKB"/>
</dbReference>
<dbReference type="GO" id="GO:0006468">
    <property type="term" value="P:protein phosphorylation"/>
    <property type="evidence" value="ECO:0000250"/>
    <property type="project" value="UniProtKB"/>
</dbReference>
<dbReference type="GO" id="GO:0072593">
    <property type="term" value="P:reactive oxygen species metabolic process"/>
    <property type="evidence" value="ECO:0000250"/>
    <property type="project" value="UniProtKB"/>
</dbReference>
<dbReference type="GO" id="GO:0009611">
    <property type="term" value="P:response to wounding"/>
    <property type="evidence" value="ECO:0000250"/>
    <property type="project" value="UniProtKB"/>
</dbReference>
<dbReference type="CDD" id="cd00135">
    <property type="entry name" value="PDGF"/>
    <property type="match status" value="1"/>
</dbReference>
<dbReference type="FunFam" id="2.10.90.10:FF:000023">
    <property type="entry name" value="Platelet-derived growth factor subunit B"/>
    <property type="match status" value="1"/>
</dbReference>
<dbReference type="Gene3D" id="2.10.90.10">
    <property type="entry name" value="Cystine-knot cytokines"/>
    <property type="match status" value="1"/>
</dbReference>
<dbReference type="InterPro" id="IPR029034">
    <property type="entry name" value="Cystine-knot_cytokine"/>
</dbReference>
<dbReference type="InterPro" id="IPR023581">
    <property type="entry name" value="PD_growth_factor_CS"/>
</dbReference>
<dbReference type="InterPro" id="IPR000072">
    <property type="entry name" value="PDGF/VEGF_dom"/>
</dbReference>
<dbReference type="InterPro" id="IPR006782">
    <property type="entry name" value="PDGF_N"/>
</dbReference>
<dbReference type="PANTHER" id="PTHR11633">
    <property type="entry name" value="PLATELET-DERIVED GROWTH FACTOR"/>
    <property type="match status" value="1"/>
</dbReference>
<dbReference type="PANTHER" id="PTHR11633:SF2">
    <property type="entry name" value="PLATELET-DERIVED GROWTH FACTOR SUBUNIT B"/>
    <property type="match status" value="1"/>
</dbReference>
<dbReference type="Pfam" id="PF00341">
    <property type="entry name" value="PDGF"/>
    <property type="match status" value="1"/>
</dbReference>
<dbReference type="Pfam" id="PF04692">
    <property type="entry name" value="PDGF_N"/>
    <property type="match status" value="1"/>
</dbReference>
<dbReference type="SMART" id="SM00141">
    <property type="entry name" value="PDGF"/>
    <property type="match status" value="1"/>
</dbReference>
<dbReference type="SUPFAM" id="SSF57501">
    <property type="entry name" value="Cystine-knot cytokines"/>
    <property type="match status" value="1"/>
</dbReference>
<dbReference type="PROSITE" id="PS00249">
    <property type="entry name" value="PDGF_1"/>
    <property type="match status" value="1"/>
</dbReference>
<dbReference type="PROSITE" id="PS50278">
    <property type="entry name" value="PDGF_2"/>
    <property type="match status" value="1"/>
</dbReference>
<evidence type="ECO:0000250" key="1"/>
<evidence type="ECO:0000250" key="2">
    <source>
        <dbReference type="UniProtKB" id="P01127"/>
    </source>
</evidence>
<evidence type="ECO:0000250" key="3">
    <source>
        <dbReference type="UniProtKB" id="P31240"/>
    </source>
</evidence>
<evidence type="ECO:0000255" key="4"/>
<evidence type="ECO:0000256" key="5">
    <source>
        <dbReference type="SAM" id="MobiDB-lite"/>
    </source>
</evidence>
<evidence type="ECO:0000305" key="6"/>
<name>PDGFB_FELCA</name>
<keyword id="KW-0165">Cleavage on pair of basic residues</keyword>
<keyword id="KW-0217">Developmental protein</keyword>
<keyword id="KW-1015">Disulfide bond</keyword>
<keyword id="KW-0325">Glycoprotein</keyword>
<keyword id="KW-0339">Growth factor</keyword>
<keyword id="KW-0497">Mitogen</keyword>
<keyword id="KW-0656">Proto-oncogene</keyword>
<keyword id="KW-1185">Reference proteome</keyword>
<keyword id="KW-0964">Secreted</keyword>
<keyword id="KW-0732">Signal</keyword>
<sequence>MNRCWALFLSLCCYLRLVSAEGDPIPEELYKMLSDHSIRSFDDLQRLLHGDSVDEDRAELDLNSTRSHCGGELESLSRGRRSLGEAAGSPTVAEPAMIAECKTRTEVFEVSRRLIDRTNANFLVWPPCVEVQRCSGCCNNRNVQCRPTQVQLRLVQVRKIEIVRKRPVFKKATVTLEDHLACKCETVVAARPVTRSPGSSQEQRARTPQTRVTIRTVRVRRPPKGKHQKFKHTHDKKALKETLGA</sequence>
<reference key="1">
    <citation type="journal article" date="1987" name="Nucleic Acids Res.">
        <title>Genetic organization of the c-sis transcription unit.</title>
        <authorList>
            <person name="van den Ouweland A.M.W."/>
            <person name="van Groningen J.J.M."/>
            <person name="Schalken J.A."/>
            <person name="van Neck H.W."/>
            <person name="Bloemers H.P.J."/>
            <person name="van de Ven W.J.M."/>
        </authorList>
    </citation>
    <scope>NUCLEOTIDE SEQUENCE [MRNA]</scope>
</reference>
<reference key="2">
    <citation type="submission" date="1996-11" db="EMBL/GenBank/DDBJ databases">
        <authorList>
            <person name="van den Ouweland A.M.W."/>
        </authorList>
    </citation>
    <scope>SEQUENCE REVISION</scope>
</reference>
<organism>
    <name type="scientific">Felis catus</name>
    <name type="common">Cat</name>
    <name type="synonym">Felis silvestris catus</name>
    <dbReference type="NCBI Taxonomy" id="9685"/>
    <lineage>
        <taxon>Eukaryota</taxon>
        <taxon>Metazoa</taxon>
        <taxon>Chordata</taxon>
        <taxon>Craniata</taxon>
        <taxon>Vertebrata</taxon>
        <taxon>Euteleostomi</taxon>
        <taxon>Mammalia</taxon>
        <taxon>Eutheria</taxon>
        <taxon>Laurasiatheria</taxon>
        <taxon>Carnivora</taxon>
        <taxon>Feliformia</taxon>
        <taxon>Felidae</taxon>
        <taxon>Felinae</taxon>
        <taxon>Felis</taxon>
    </lineage>
</organism>
<gene>
    <name type="primary">PDGFB</name>
    <name type="synonym">SIS</name>
</gene>
<comment type="function">
    <text evidence="2 3">Growth factor that plays an essential role in the regulation of embryonic development, cell proliferation, cell migration, survival and chemotaxis. Potent mitogen for cells of mesenchymal origin. Required for normal proliferation and recruitment of pericytes and vascular smooth muscle cells in the central nervous system, skin, lung, heart and placenta. Required for normal blood vessel development, and for normal development of kidney glomeruli. Plays an important role in wound healing. Signaling is modulated by the formation of heterodimers with PDGFA (By similarity).</text>
</comment>
<comment type="subunit">
    <text evidence="1 2">Antiparallel homodimer; disulfide-linked. Antiparallel heterodimer with PDGFA; disulfide-linked. The PDGFB homodimer interacts with PDGFRA and PDGFRB homodimers, and with heterodimers formed by PDGFRA and PDGFRB. The heterodimer composed of PDGFA and PDGFB interacts with PDGFRB homodimers, and with heterodimers formed by PDGFRA and PDGFRB. Interacts with XLKD1 (By similarity). Interacts with LRP1. Interacts with SORL1 (via the N-terminal ectodomain). Interacts with CD82; this interaction inhibits PDGFB-mediated signaling pathway (By similarity).</text>
</comment>
<comment type="subcellular location">
    <subcellularLocation>
        <location evidence="1">Secreted</location>
    </subcellularLocation>
    <text evidence="1">Released by platelets upon wounding.</text>
</comment>
<comment type="similarity">
    <text evidence="6">Belongs to the PDGF/VEGF growth factor family.</text>
</comment>
<feature type="signal peptide" evidence="1">
    <location>
        <begin position="1"/>
        <end position="20"/>
    </location>
</feature>
<feature type="propeptide" id="PRO_0000023368" description="Removed in mature form">
    <location>
        <begin position="21"/>
        <end position="81"/>
    </location>
</feature>
<feature type="chain" id="PRO_0000023369" description="Platelet-derived growth factor subunit B">
    <location>
        <begin position="82"/>
        <end position="194"/>
    </location>
</feature>
<feature type="propeptide" id="PRO_0000023370" description="Removed in mature form">
    <location>
        <begin position="195"/>
        <end position="245"/>
    </location>
</feature>
<feature type="region of interest" description="Disordered" evidence="5">
    <location>
        <begin position="220"/>
        <end position="245"/>
    </location>
</feature>
<feature type="compositionally biased region" description="Basic residues" evidence="5">
    <location>
        <begin position="220"/>
        <end position="235"/>
    </location>
</feature>
<feature type="compositionally biased region" description="Basic and acidic residues" evidence="5">
    <location>
        <begin position="236"/>
        <end position="245"/>
    </location>
</feature>
<feature type="glycosylation site" description="N-linked (GlcNAc...) asparagine" evidence="4">
    <location>
        <position position="63"/>
    </location>
</feature>
<feature type="disulfide bond" evidence="1">
    <location>
        <begin position="101"/>
        <end position="145"/>
    </location>
</feature>
<feature type="disulfide bond" description="Interchain" evidence="1">
    <location>
        <position position="128"/>
    </location>
</feature>
<feature type="disulfide bond" evidence="1">
    <location>
        <begin position="134"/>
        <end position="182"/>
    </location>
</feature>
<feature type="disulfide bond" description="Interchain" evidence="1">
    <location>
        <position position="137"/>
    </location>
</feature>
<feature type="disulfide bond" evidence="1">
    <location>
        <begin position="138"/>
        <end position="184"/>
    </location>
</feature>
<accession>P12919</accession>